<protein>
    <recommendedName>
        <fullName evidence="1">Protein-glutamate methylesterase/protein-glutamine glutaminase 2</fullName>
        <ecNumber evidence="1">3.1.1.61</ecNumber>
        <ecNumber evidence="1">3.5.1.44</ecNumber>
    </recommendedName>
</protein>
<keyword id="KW-0145">Chemotaxis</keyword>
<keyword id="KW-0963">Cytoplasm</keyword>
<keyword id="KW-0378">Hydrolase</keyword>
<keyword id="KW-0597">Phosphoprotein</keyword>
<keyword id="KW-1185">Reference proteome</keyword>
<comment type="function">
    <text evidence="1">Involved in chemotaxis. Part of a chemotaxis signal transduction system that modulates chemotaxis in response to various stimuli. Catalyzes the demethylation of specific methylglutamate residues introduced into the chemoreceptors (methyl-accepting chemotaxis proteins or MCP) by CheR. Also mediates the irreversible deamidation of specific glutamine residues to glutamic acid.</text>
</comment>
<comment type="catalytic activity">
    <reaction evidence="1">
        <text>[protein]-L-glutamate 5-O-methyl ester + H2O = L-glutamyl-[protein] + methanol + H(+)</text>
        <dbReference type="Rhea" id="RHEA:23236"/>
        <dbReference type="Rhea" id="RHEA-COMP:10208"/>
        <dbReference type="Rhea" id="RHEA-COMP:10311"/>
        <dbReference type="ChEBI" id="CHEBI:15377"/>
        <dbReference type="ChEBI" id="CHEBI:15378"/>
        <dbReference type="ChEBI" id="CHEBI:17790"/>
        <dbReference type="ChEBI" id="CHEBI:29973"/>
        <dbReference type="ChEBI" id="CHEBI:82795"/>
        <dbReference type="EC" id="3.1.1.61"/>
    </reaction>
</comment>
<comment type="catalytic activity">
    <reaction evidence="1">
        <text>L-glutaminyl-[protein] + H2O = L-glutamyl-[protein] + NH4(+)</text>
        <dbReference type="Rhea" id="RHEA:16441"/>
        <dbReference type="Rhea" id="RHEA-COMP:10207"/>
        <dbReference type="Rhea" id="RHEA-COMP:10208"/>
        <dbReference type="ChEBI" id="CHEBI:15377"/>
        <dbReference type="ChEBI" id="CHEBI:28938"/>
        <dbReference type="ChEBI" id="CHEBI:29973"/>
        <dbReference type="ChEBI" id="CHEBI:30011"/>
        <dbReference type="EC" id="3.5.1.44"/>
    </reaction>
</comment>
<comment type="subcellular location">
    <subcellularLocation>
        <location evidence="1">Cytoplasm</location>
    </subcellularLocation>
</comment>
<comment type="domain">
    <text evidence="1">Contains a C-terminal catalytic domain, and an N-terminal region which modulates catalytic activity.</text>
</comment>
<comment type="PTM">
    <text evidence="1">Phosphorylated by CheA. Phosphorylation of the N-terminal regulatory domain activates the methylesterase activity.</text>
</comment>
<comment type="similarity">
    <text evidence="1">Belongs to the CheB family.</text>
</comment>
<name>CHEB2_BORA1</name>
<dbReference type="EC" id="3.1.1.61" evidence="1"/>
<dbReference type="EC" id="3.5.1.44" evidence="1"/>
<dbReference type="EMBL" id="AM167904">
    <property type="protein sequence ID" value="CAJ49287.1"/>
    <property type="molecule type" value="Genomic_DNA"/>
</dbReference>
<dbReference type="RefSeq" id="WP_012417348.1">
    <property type="nucleotide sequence ID" value="NC_010645.1"/>
</dbReference>
<dbReference type="SMR" id="Q2L1D1"/>
<dbReference type="STRING" id="360910.BAV1679"/>
<dbReference type="KEGG" id="bav:BAV1679"/>
<dbReference type="eggNOG" id="COG2201">
    <property type="taxonomic scope" value="Bacteria"/>
</dbReference>
<dbReference type="HOGENOM" id="CLU_000445_51_0_4"/>
<dbReference type="OrthoDB" id="9793421at2"/>
<dbReference type="Proteomes" id="UP000001977">
    <property type="component" value="Chromosome"/>
</dbReference>
<dbReference type="GO" id="GO:0005737">
    <property type="term" value="C:cytoplasm"/>
    <property type="evidence" value="ECO:0007669"/>
    <property type="project" value="UniProtKB-SubCell"/>
</dbReference>
<dbReference type="GO" id="GO:0000156">
    <property type="term" value="F:phosphorelay response regulator activity"/>
    <property type="evidence" value="ECO:0007669"/>
    <property type="project" value="InterPro"/>
</dbReference>
<dbReference type="GO" id="GO:0008984">
    <property type="term" value="F:protein-glutamate methylesterase activity"/>
    <property type="evidence" value="ECO:0007669"/>
    <property type="project" value="UniProtKB-UniRule"/>
</dbReference>
<dbReference type="GO" id="GO:0050568">
    <property type="term" value="F:protein-glutamine glutaminase activity"/>
    <property type="evidence" value="ECO:0007669"/>
    <property type="project" value="UniProtKB-UniRule"/>
</dbReference>
<dbReference type="GO" id="GO:0006935">
    <property type="term" value="P:chemotaxis"/>
    <property type="evidence" value="ECO:0007669"/>
    <property type="project" value="UniProtKB-UniRule"/>
</dbReference>
<dbReference type="CDD" id="cd16432">
    <property type="entry name" value="CheB_Rec"/>
    <property type="match status" value="1"/>
</dbReference>
<dbReference type="CDD" id="cd17541">
    <property type="entry name" value="REC_CheB-like"/>
    <property type="match status" value="1"/>
</dbReference>
<dbReference type="FunFam" id="3.40.50.180:FF:000001">
    <property type="entry name" value="Protein-glutamate methylesterase/protein-glutamine glutaminase"/>
    <property type="match status" value="1"/>
</dbReference>
<dbReference type="FunFam" id="3.40.50.2300:FF:000060">
    <property type="entry name" value="Protein-glutamate methylesterase/protein-glutamine glutaminase"/>
    <property type="match status" value="1"/>
</dbReference>
<dbReference type="Gene3D" id="3.40.50.2300">
    <property type="match status" value="1"/>
</dbReference>
<dbReference type="Gene3D" id="3.40.50.180">
    <property type="entry name" value="Methylesterase CheB, C-terminal domain"/>
    <property type="match status" value="1"/>
</dbReference>
<dbReference type="HAMAP" id="MF_00099">
    <property type="entry name" value="CheB_chemtxs"/>
    <property type="match status" value="1"/>
</dbReference>
<dbReference type="InterPro" id="IPR008248">
    <property type="entry name" value="CheB-like"/>
</dbReference>
<dbReference type="InterPro" id="IPR035909">
    <property type="entry name" value="CheB_C"/>
</dbReference>
<dbReference type="InterPro" id="IPR011006">
    <property type="entry name" value="CheY-like_superfamily"/>
</dbReference>
<dbReference type="InterPro" id="IPR000673">
    <property type="entry name" value="Sig_transdc_resp-reg_Me-estase"/>
</dbReference>
<dbReference type="InterPro" id="IPR001789">
    <property type="entry name" value="Sig_transdc_resp-reg_receiver"/>
</dbReference>
<dbReference type="NCBIfam" id="NF001965">
    <property type="entry name" value="PRK00742.1"/>
    <property type="match status" value="1"/>
</dbReference>
<dbReference type="NCBIfam" id="NF009206">
    <property type="entry name" value="PRK12555.1"/>
    <property type="match status" value="1"/>
</dbReference>
<dbReference type="PANTHER" id="PTHR42872">
    <property type="entry name" value="PROTEIN-GLUTAMATE METHYLESTERASE/PROTEIN-GLUTAMINE GLUTAMINASE"/>
    <property type="match status" value="1"/>
</dbReference>
<dbReference type="PANTHER" id="PTHR42872:SF6">
    <property type="entry name" value="PROTEIN-GLUTAMATE METHYLESTERASE_PROTEIN-GLUTAMINE GLUTAMINASE"/>
    <property type="match status" value="1"/>
</dbReference>
<dbReference type="Pfam" id="PF01339">
    <property type="entry name" value="CheB_methylest"/>
    <property type="match status" value="1"/>
</dbReference>
<dbReference type="Pfam" id="PF00072">
    <property type="entry name" value="Response_reg"/>
    <property type="match status" value="1"/>
</dbReference>
<dbReference type="PIRSF" id="PIRSF000876">
    <property type="entry name" value="RR_chemtxs_CheB"/>
    <property type="match status" value="1"/>
</dbReference>
<dbReference type="SMART" id="SM00448">
    <property type="entry name" value="REC"/>
    <property type="match status" value="1"/>
</dbReference>
<dbReference type="SUPFAM" id="SSF52172">
    <property type="entry name" value="CheY-like"/>
    <property type="match status" value="1"/>
</dbReference>
<dbReference type="SUPFAM" id="SSF52738">
    <property type="entry name" value="Methylesterase CheB, C-terminal domain"/>
    <property type="match status" value="1"/>
</dbReference>
<dbReference type="PROSITE" id="PS50122">
    <property type="entry name" value="CHEB"/>
    <property type="match status" value="1"/>
</dbReference>
<dbReference type="PROSITE" id="PS50110">
    <property type="entry name" value="RESPONSE_REGULATORY"/>
    <property type="match status" value="1"/>
</dbReference>
<reference key="1">
    <citation type="journal article" date="2006" name="J. Bacteriol.">
        <title>Comparison of the genome sequence of the poultry pathogen Bordetella avium with those of B. bronchiseptica, B. pertussis, and B. parapertussis reveals extensive diversity in surface structures associated with host interaction.</title>
        <authorList>
            <person name="Sebaihia M."/>
            <person name="Preston A."/>
            <person name="Maskell D.J."/>
            <person name="Kuzmiak H."/>
            <person name="Connell T.D."/>
            <person name="King N.D."/>
            <person name="Orndorff P.E."/>
            <person name="Miyamoto D.M."/>
            <person name="Thomson N.R."/>
            <person name="Harris D."/>
            <person name="Goble A."/>
            <person name="Lord A."/>
            <person name="Murphy L."/>
            <person name="Quail M.A."/>
            <person name="Rutter S."/>
            <person name="Squares R."/>
            <person name="Squares S."/>
            <person name="Woodward J."/>
            <person name="Parkhill J."/>
            <person name="Temple L.M."/>
        </authorList>
    </citation>
    <scope>NUCLEOTIDE SEQUENCE [LARGE SCALE GENOMIC DNA]</scope>
    <source>
        <strain>197N</strain>
    </source>
</reference>
<evidence type="ECO:0000255" key="1">
    <source>
        <dbReference type="HAMAP-Rule" id="MF_00099"/>
    </source>
</evidence>
<feature type="chain" id="PRO_0000264263" description="Protein-glutamate methylesterase/protein-glutamine glutaminase 2">
    <location>
        <begin position="1"/>
        <end position="351"/>
    </location>
</feature>
<feature type="domain" description="Response regulatory" evidence="1">
    <location>
        <begin position="5"/>
        <end position="122"/>
    </location>
</feature>
<feature type="domain" description="CheB-type methylesterase" evidence="1">
    <location>
        <begin position="154"/>
        <end position="341"/>
    </location>
</feature>
<feature type="active site" evidence="1">
    <location>
        <position position="166"/>
    </location>
</feature>
<feature type="active site" evidence="1">
    <location>
        <position position="192"/>
    </location>
</feature>
<feature type="active site" evidence="1">
    <location>
        <position position="289"/>
    </location>
</feature>
<feature type="modified residue" description="4-aspartylphosphate" evidence="1">
    <location>
        <position position="56"/>
    </location>
</feature>
<accession>Q2L1D1</accession>
<proteinExistence type="inferred from homology"/>
<sequence length="351" mass="37674">MKKIRVICVDDSALVRGLMTEIINSHPDMEVVATAPDPLVARELIKQHNPDVLTLDVEMPRMDGLDFLEKLMRLRPMPVVMVSSLTERGGEITMRALELGAIDFVTKPRLGIRDGLLDYSELIADKIRAASRARLRGPAPVAAAALPARLRSPLNSSEKLVILGASTGGTEAIREVLLPLPPDSPAILITQHMPAGFTRSFAQRLDTLCAVTVREATHGERVLPGHVYLAPGGEQHMKLGRSGANYVIELEAGEPVNRHRPSVDVLFHSAAQAAGRNAIGVLLTGMGKDGAAGLLAMKRAGAYTLAQDEASCVVFGMPREAILLGAADEVVPLPAMSERILMRAGDRGHRV</sequence>
<organism>
    <name type="scientific">Bordetella avium (strain 197N)</name>
    <dbReference type="NCBI Taxonomy" id="360910"/>
    <lineage>
        <taxon>Bacteria</taxon>
        <taxon>Pseudomonadati</taxon>
        <taxon>Pseudomonadota</taxon>
        <taxon>Betaproteobacteria</taxon>
        <taxon>Burkholderiales</taxon>
        <taxon>Alcaligenaceae</taxon>
        <taxon>Bordetella</taxon>
    </lineage>
</organism>
<gene>
    <name evidence="1" type="primary">cheB2</name>
    <name type="ordered locus">BAV1679</name>
</gene>